<organism>
    <name type="scientific">Methanospirillum hungatei JF-1 (strain ATCC 27890 / DSM 864 / NBRC 100397 / JF-1)</name>
    <dbReference type="NCBI Taxonomy" id="323259"/>
    <lineage>
        <taxon>Archaea</taxon>
        <taxon>Methanobacteriati</taxon>
        <taxon>Methanobacteriota</taxon>
        <taxon>Stenosarchaea group</taxon>
        <taxon>Methanomicrobia</taxon>
        <taxon>Methanomicrobiales</taxon>
        <taxon>Methanospirillaceae</taxon>
        <taxon>Methanospirillum</taxon>
    </lineage>
</organism>
<protein>
    <recommendedName>
        <fullName evidence="1">Phosphomethylpyrimidine synthase</fullName>
        <ecNumber evidence="1">4.1.99.17</ecNumber>
    </recommendedName>
    <alternativeName>
        <fullName evidence="1">Hydroxymethylpyrimidine phosphate synthase</fullName>
        <shortName evidence="1">HMP-P synthase</shortName>
        <shortName evidence="1">HMP-phosphate synthase</shortName>
        <shortName evidence="1">HMPP synthase</shortName>
    </alternativeName>
    <alternativeName>
        <fullName evidence="1">Thiamine biosynthesis protein ThiC</fullName>
    </alternativeName>
</protein>
<dbReference type="EC" id="4.1.99.17" evidence="1"/>
<dbReference type="EMBL" id="CP000254">
    <property type="protein sequence ID" value="ABD41435.1"/>
    <property type="molecule type" value="Genomic_DNA"/>
</dbReference>
<dbReference type="RefSeq" id="WP_011448700.1">
    <property type="nucleotide sequence ID" value="NC_007796.1"/>
</dbReference>
<dbReference type="SMR" id="Q2FQY7"/>
<dbReference type="FunCoup" id="Q2FQY7">
    <property type="interactions" value="124"/>
</dbReference>
<dbReference type="STRING" id="323259.Mhun_1712"/>
<dbReference type="EnsemblBacteria" id="ABD41435">
    <property type="protein sequence ID" value="ABD41435"/>
    <property type="gene ID" value="Mhun_1712"/>
</dbReference>
<dbReference type="GeneID" id="3924892"/>
<dbReference type="KEGG" id="mhu:Mhun_1712"/>
<dbReference type="eggNOG" id="arCOG02741">
    <property type="taxonomic scope" value="Archaea"/>
</dbReference>
<dbReference type="HOGENOM" id="CLU_013181_2_2_2"/>
<dbReference type="InParanoid" id="Q2FQY7"/>
<dbReference type="OrthoDB" id="335406at2157"/>
<dbReference type="UniPathway" id="UPA00060"/>
<dbReference type="Proteomes" id="UP000001941">
    <property type="component" value="Chromosome"/>
</dbReference>
<dbReference type="GO" id="GO:0051539">
    <property type="term" value="F:4 iron, 4 sulfur cluster binding"/>
    <property type="evidence" value="ECO:0007669"/>
    <property type="project" value="UniProtKB-KW"/>
</dbReference>
<dbReference type="GO" id="GO:0016830">
    <property type="term" value="F:carbon-carbon lyase activity"/>
    <property type="evidence" value="ECO:0007669"/>
    <property type="project" value="InterPro"/>
</dbReference>
<dbReference type="GO" id="GO:0008270">
    <property type="term" value="F:zinc ion binding"/>
    <property type="evidence" value="ECO:0007669"/>
    <property type="project" value="UniProtKB-UniRule"/>
</dbReference>
<dbReference type="GO" id="GO:0009228">
    <property type="term" value="P:thiamine biosynthetic process"/>
    <property type="evidence" value="ECO:0007669"/>
    <property type="project" value="UniProtKB-KW"/>
</dbReference>
<dbReference type="GO" id="GO:0009229">
    <property type="term" value="P:thiamine diphosphate biosynthetic process"/>
    <property type="evidence" value="ECO:0007669"/>
    <property type="project" value="UniProtKB-UniRule"/>
</dbReference>
<dbReference type="Gene3D" id="6.10.250.620">
    <property type="match status" value="1"/>
</dbReference>
<dbReference type="Gene3D" id="3.20.20.540">
    <property type="entry name" value="Radical SAM ThiC family, central domain"/>
    <property type="match status" value="1"/>
</dbReference>
<dbReference type="HAMAP" id="MF_00089">
    <property type="entry name" value="ThiC"/>
    <property type="match status" value="1"/>
</dbReference>
<dbReference type="InterPro" id="IPR037509">
    <property type="entry name" value="ThiC"/>
</dbReference>
<dbReference type="InterPro" id="IPR038521">
    <property type="entry name" value="ThiC/Bza_core_dom"/>
</dbReference>
<dbReference type="InterPro" id="IPR002817">
    <property type="entry name" value="ThiC/BzaA/B"/>
</dbReference>
<dbReference type="NCBIfam" id="NF009895">
    <property type="entry name" value="PRK13352.1"/>
    <property type="match status" value="1"/>
</dbReference>
<dbReference type="NCBIfam" id="TIGR00190">
    <property type="entry name" value="thiC"/>
    <property type="match status" value="1"/>
</dbReference>
<dbReference type="PANTHER" id="PTHR30557:SF1">
    <property type="entry name" value="PHOSPHOMETHYLPYRIMIDINE SYNTHASE, CHLOROPLASTIC"/>
    <property type="match status" value="1"/>
</dbReference>
<dbReference type="PANTHER" id="PTHR30557">
    <property type="entry name" value="THIAMINE BIOSYNTHESIS PROTEIN THIC"/>
    <property type="match status" value="1"/>
</dbReference>
<dbReference type="Pfam" id="PF01964">
    <property type="entry name" value="ThiC_Rad_SAM"/>
    <property type="match status" value="1"/>
</dbReference>
<dbReference type="SFLD" id="SFLDF00407">
    <property type="entry name" value="phosphomethylpyrimidine_syntha"/>
    <property type="match status" value="1"/>
</dbReference>
<dbReference type="SFLD" id="SFLDG01114">
    <property type="entry name" value="phosphomethylpyrimidine_syntha"/>
    <property type="match status" value="1"/>
</dbReference>
<dbReference type="SFLD" id="SFLDS00113">
    <property type="entry name" value="Radical_SAM_Phosphomethylpyrim"/>
    <property type="match status" value="1"/>
</dbReference>
<evidence type="ECO:0000255" key="1">
    <source>
        <dbReference type="HAMAP-Rule" id="MF_00089"/>
    </source>
</evidence>
<name>THIC_METHJ</name>
<sequence length="426" mass="46735">MSIVEDARKGIITEEMKVVAAQEGVTEDFIRRGIASGQIVIPVSPYRKVKLCGIGGGLRTKVNCSVGTSTDIVDVDMEVEKVKAGERAGADTIMELSTGGDFVEIRRRCIEATTLSVGSVPLYQAFIEAARKDGAVIHMREDDLFRITEEQAKLGTNFMAIHTGVNRITLERLQRQGRHGGLCSRGGAFLTAWMLHNDKENPLYAEFDYLCEILKEHEVTLSTGNGMRAGAVHDATDRAQIQELIINAELGDRAHEMGIQVIVEGPGHVPLDQIETNVRLMKRMSGNKPFYMLGPIVTDIAPGYDDRVSAIGAAMSSMHGADFICYVTPAEHLALPNPEEVYEGVISSRIAAHVGDMIKLNKRDQDLAMGHARRDLDWEAQFNLAINPARARQIRNERASADADACTMCGDYCALKIANKVIKKLD</sequence>
<accession>Q2FQY7</accession>
<gene>
    <name evidence="1" type="primary">thiC</name>
    <name type="ordered locus">Mhun_1712</name>
</gene>
<keyword id="KW-0004">4Fe-4S</keyword>
<keyword id="KW-0408">Iron</keyword>
<keyword id="KW-0411">Iron-sulfur</keyword>
<keyword id="KW-0456">Lyase</keyword>
<keyword id="KW-0479">Metal-binding</keyword>
<keyword id="KW-1185">Reference proteome</keyword>
<keyword id="KW-0949">S-adenosyl-L-methionine</keyword>
<keyword id="KW-0784">Thiamine biosynthesis</keyword>
<keyword id="KW-0862">Zinc</keyword>
<proteinExistence type="inferred from homology"/>
<reference key="1">
    <citation type="journal article" date="2016" name="Stand. Genomic Sci.">
        <title>Complete genome sequence of Methanospirillum hungatei type strain JF1.</title>
        <authorList>
            <person name="Gunsalus R.P."/>
            <person name="Cook L.E."/>
            <person name="Crable B."/>
            <person name="Rohlin L."/>
            <person name="McDonald E."/>
            <person name="Mouttaki H."/>
            <person name="Sieber J.R."/>
            <person name="Poweleit N."/>
            <person name="Zhou H."/>
            <person name="Lapidus A.L."/>
            <person name="Daligault H.E."/>
            <person name="Land M."/>
            <person name="Gilna P."/>
            <person name="Ivanova N."/>
            <person name="Kyrpides N."/>
            <person name="Culley D.E."/>
            <person name="McInerney M.J."/>
        </authorList>
    </citation>
    <scope>NUCLEOTIDE SEQUENCE [LARGE SCALE GENOMIC DNA]</scope>
    <source>
        <strain>ATCC 27890 / DSM 864 / NBRC 100397 / JF-1</strain>
    </source>
</reference>
<feature type="chain" id="PRO_0000242328" description="Phosphomethylpyrimidine synthase">
    <location>
        <begin position="1"/>
        <end position="426"/>
    </location>
</feature>
<feature type="binding site" evidence="1">
    <location>
        <position position="94"/>
    </location>
    <ligand>
        <name>substrate</name>
    </ligand>
</feature>
<feature type="binding site" evidence="1">
    <location>
        <position position="123"/>
    </location>
    <ligand>
        <name>substrate</name>
    </ligand>
</feature>
<feature type="binding site" evidence="1">
    <location>
        <position position="162"/>
    </location>
    <ligand>
        <name>substrate</name>
    </ligand>
</feature>
<feature type="binding site" evidence="1">
    <location>
        <begin position="184"/>
        <end position="186"/>
    </location>
    <ligand>
        <name>substrate</name>
    </ligand>
</feature>
<feature type="binding site" evidence="1">
    <location>
        <begin position="225"/>
        <end position="228"/>
    </location>
    <ligand>
        <name>substrate</name>
    </ligand>
</feature>
<feature type="binding site" evidence="1">
    <location>
        <position position="264"/>
    </location>
    <ligand>
        <name>substrate</name>
    </ligand>
</feature>
<feature type="binding site" evidence="1">
    <location>
        <position position="268"/>
    </location>
    <ligand>
        <name>Zn(2+)</name>
        <dbReference type="ChEBI" id="CHEBI:29105"/>
    </ligand>
</feature>
<feature type="binding site" evidence="1">
    <location>
        <position position="291"/>
    </location>
    <ligand>
        <name>substrate</name>
    </ligand>
</feature>
<feature type="binding site" evidence="1">
    <location>
        <position position="332"/>
    </location>
    <ligand>
        <name>Zn(2+)</name>
        <dbReference type="ChEBI" id="CHEBI:29105"/>
    </ligand>
</feature>
<feature type="binding site" evidence="1">
    <location>
        <position position="406"/>
    </location>
    <ligand>
        <name>[4Fe-4S] cluster</name>
        <dbReference type="ChEBI" id="CHEBI:49883"/>
        <note>4Fe-4S-S-AdoMet</note>
    </ligand>
</feature>
<feature type="binding site" evidence="1">
    <location>
        <position position="409"/>
    </location>
    <ligand>
        <name>[4Fe-4S] cluster</name>
        <dbReference type="ChEBI" id="CHEBI:49883"/>
        <note>4Fe-4S-S-AdoMet</note>
    </ligand>
</feature>
<feature type="binding site" evidence="1">
    <location>
        <position position="413"/>
    </location>
    <ligand>
        <name>[4Fe-4S] cluster</name>
        <dbReference type="ChEBI" id="CHEBI:49883"/>
        <note>4Fe-4S-S-AdoMet</note>
    </ligand>
</feature>
<comment type="function">
    <text evidence="1">Catalyzes the synthesis of the hydroxymethylpyrimidine phosphate (HMP-P) moiety of thiamine from aminoimidazole ribotide (AIR) in a radical S-adenosyl-L-methionine (SAM)-dependent reaction.</text>
</comment>
<comment type="catalytic activity">
    <reaction evidence="1">
        <text>5-amino-1-(5-phospho-beta-D-ribosyl)imidazole + S-adenosyl-L-methionine = 4-amino-2-methyl-5-(phosphooxymethyl)pyrimidine + CO + 5'-deoxyadenosine + formate + L-methionine + 3 H(+)</text>
        <dbReference type="Rhea" id="RHEA:24840"/>
        <dbReference type="ChEBI" id="CHEBI:15378"/>
        <dbReference type="ChEBI" id="CHEBI:15740"/>
        <dbReference type="ChEBI" id="CHEBI:17245"/>
        <dbReference type="ChEBI" id="CHEBI:17319"/>
        <dbReference type="ChEBI" id="CHEBI:57844"/>
        <dbReference type="ChEBI" id="CHEBI:58354"/>
        <dbReference type="ChEBI" id="CHEBI:59789"/>
        <dbReference type="ChEBI" id="CHEBI:137981"/>
        <dbReference type="EC" id="4.1.99.17"/>
    </reaction>
</comment>
<comment type="cofactor">
    <cofactor evidence="1">
        <name>[4Fe-4S] cluster</name>
        <dbReference type="ChEBI" id="CHEBI:49883"/>
    </cofactor>
    <text evidence="1">Binds 1 [4Fe-4S] cluster per subunit. The cluster is coordinated with 3 cysteines and an exchangeable S-adenosyl-L-methionine.</text>
</comment>
<comment type="pathway">
    <text evidence="1">Cofactor biosynthesis; thiamine diphosphate biosynthesis.</text>
</comment>
<comment type="similarity">
    <text evidence="1">Belongs to the ThiC family.</text>
</comment>